<evidence type="ECO:0000255" key="1">
    <source>
        <dbReference type="HAMAP-Rule" id="MF_01322"/>
    </source>
</evidence>
<gene>
    <name evidence="1" type="primary">rpoC</name>
    <name type="ordered locus">YpsIP31758_3859</name>
</gene>
<name>RPOC_YERP3</name>
<keyword id="KW-0240">DNA-directed RNA polymerase</keyword>
<keyword id="KW-0460">Magnesium</keyword>
<keyword id="KW-0479">Metal-binding</keyword>
<keyword id="KW-0548">Nucleotidyltransferase</keyword>
<keyword id="KW-0804">Transcription</keyword>
<keyword id="KW-0808">Transferase</keyword>
<keyword id="KW-0862">Zinc</keyword>
<feature type="chain" id="PRO_0000353466" description="DNA-directed RNA polymerase subunit beta'">
    <location>
        <begin position="1"/>
        <end position="1406"/>
    </location>
</feature>
<feature type="binding site" evidence="1">
    <location>
        <position position="70"/>
    </location>
    <ligand>
        <name>Zn(2+)</name>
        <dbReference type="ChEBI" id="CHEBI:29105"/>
        <label>1</label>
    </ligand>
</feature>
<feature type="binding site" evidence="1">
    <location>
        <position position="72"/>
    </location>
    <ligand>
        <name>Zn(2+)</name>
        <dbReference type="ChEBI" id="CHEBI:29105"/>
        <label>1</label>
    </ligand>
</feature>
<feature type="binding site" evidence="1">
    <location>
        <position position="85"/>
    </location>
    <ligand>
        <name>Zn(2+)</name>
        <dbReference type="ChEBI" id="CHEBI:29105"/>
        <label>1</label>
    </ligand>
</feature>
<feature type="binding site" evidence="1">
    <location>
        <position position="88"/>
    </location>
    <ligand>
        <name>Zn(2+)</name>
        <dbReference type="ChEBI" id="CHEBI:29105"/>
        <label>1</label>
    </ligand>
</feature>
<feature type="binding site" evidence="1">
    <location>
        <position position="460"/>
    </location>
    <ligand>
        <name>Mg(2+)</name>
        <dbReference type="ChEBI" id="CHEBI:18420"/>
    </ligand>
</feature>
<feature type="binding site" evidence="1">
    <location>
        <position position="462"/>
    </location>
    <ligand>
        <name>Mg(2+)</name>
        <dbReference type="ChEBI" id="CHEBI:18420"/>
    </ligand>
</feature>
<feature type="binding site" evidence="1">
    <location>
        <position position="464"/>
    </location>
    <ligand>
        <name>Mg(2+)</name>
        <dbReference type="ChEBI" id="CHEBI:18420"/>
    </ligand>
</feature>
<feature type="binding site" evidence="1">
    <location>
        <position position="814"/>
    </location>
    <ligand>
        <name>Zn(2+)</name>
        <dbReference type="ChEBI" id="CHEBI:29105"/>
        <label>2</label>
    </ligand>
</feature>
<feature type="binding site" evidence="1">
    <location>
        <position position="888"/>
    </location>
    <ligand>
        <name>Zn(2+)</name>
        <dbReference type="ChEBI" id="CHEBI:29105"/>
        <label>2</label>
    </ligand>
</feature>
<feature type="binding site" evidence="1">
    <location>
        <position position="895"/>
    </location>
    <ligand>
        <name>Zn(2+)</name>
        <dbReference type="ChEBI" id="CHEBI:29105"/>
        <label>2</label>
    </ligand>
</feature>
<feature type="binding site" evidence="1">
    <location>
        <position position="898"/>
    </location>
    <ligand>
        <name>Zn(2+)</name>
        <dbReference type="ChEBI" id="CHEBI:29105"/>
        <label>2</label>
    </ligand>
</feature>
<reference key="1">
    <citation type="journal article" date="2007" name="PLoS Genet.">
        <title>The complete genome sequence of Yersinia pseudotuberculosis IP31758, the causative agent of Far East scarlet-like fever.</title>
        <authorList>
            <person name="Eppinger M."/>
            <person name="Rosovitz M.J."/>
            <person name="Fricke W.F."/>
            <person name="Rasko D.A."/>
            <person name="Kokorina G."/>
            <person name="Fayolle C."/>
            <person name="Lindler L.E."/>
            <person name="Carniel E."/>
            <person name="Ravel J."/>
        </authorList>
    </citation>
    <scope>NUCLEOTIDE SEQUENCE [LARGE SCALE GENOMIC DNA]</scope>
    <source>
        <strain>IP 31758</strain>
    </source>
</reference>
<organism>
    <name type="scientific">Yersinia pseudotuberculosis serotype O:1b (strain IP 31758)</name>
    <dbReference type="NCBI Taxonomy" id="349747"/>
    <lineage>
        <taxon>Bacteria</taxon>
        <taxon>Pseudomonadati</taxon>
        <taxon>Pseudomonadota</taxon>
        <taxon>Gammaproteobacteria</taxon>
        <taxon>Enterobacterales</taxon>
        <taxon>Yersiniaceae</taxon>
        <taxon>Yersinia</taxon>
    </lineage>
</organism>
<comment type="function">
    <text evidence="1">DNA-dependent RNA polymerase catalyzes the transcription of DNA into RNA using the four ribonucleoside triphosphates as substrates.</text>
</comment>
<comment type="catalytic activity">
    <reaction evidence="1">
        <text>RNA(n) + a ribonucleoside 5'-triphosphate = RNA(n+1) + diphosphate</text>
        <dbReference type="Rhea" id="RHEA:21248"/>
        <dbReference type="Rhea" id="RHEA-COMP:14527"/>
        <dbReference type="Rhea" id="RHEA-COMP:17342"/>
        <dbReference type="ChEBI" id="CHEBI:33019"/>
        <dbReference type="ChEBI" id="CHEBI:61557"/>
        <dbReference type="ChEBI" id="CHEBI:140395"/>
        <dbReference type="EC" id="2.7.7.6"/>
    </reaction>
</comment>
<comment type="cofactor">
    <cofactor evidence="1">
        <name>Mg(2+)</name>
        <dbReference type="ChEBI" id="CHEBI:18420"/>
    </cofactor>
    <text evidence="1">Binds 1 Mg(2+) ion per subunit.</text>
</comment>
<comment type="cofactor">
    <cofactor evidence="1">
        <name>Zn(2+)</name>
        <dbReference type="ChEBI" id="CHEBI:29105"/>
    </cofactor>
    <text evidence="1">Binds 2 Zn(2+) ions per subunit.</text>
</comment>
<comment type="subunit">
    <text evidence="1">The RNAP catalytic core consists of 2 alpha, 1 beta, 1 beta' and 1 omega subunit. When a sigma factor is associated with the core the holoenzyme is formed, which can initiate transcription.</text>
</comment>
<comment type="similarity">
    <text evidence="1">Belongs to the RNA polymerase beta' chain family.</text>
</comment>
<proteinExistence type="inferred from homology"/>
<dbReference type="EC" id="2.7.7.6" evidence="1"/>
<dbReference type="EMBL" id="CP000720">
    <property type="protein sequence ID" value="ABS49557.1"/>
    <property type="molecule type" value="Genomic_DNA"/>
</dbReference>
<dbReference type="RefSeq" id="WP_002210677.1">
    <property type="nucleotide sequence ID" value="NC_009708.1"/>
</dbReference>
<dbReference type="SMR" id="A7FNI2"/>
<dbReference type="GeneID" id="96663777"/>
<dbReference type="KEGG" id="ypi:YpsIP31758_3859"/>
<dbReference type="HOGENOM" id="CLU_000524_3_1_6"/>
<dbReference type="Proteomes" id="UP000002412">
    <property type="component" value="Chromosome"/>
</dbReference>
<dbReference type="GO" id="GO:0000428">
    <property type="term" value="C:DNA-directed RNA polymerase complex"/>
    <property type="evidence" value="ECO:0007669"/>
    <property type="project" value="UniProtKB-KW"/>
</dbReference>
<dbReference type="GO" id="GO:0003677">
    <property type="term" value="F:DNA binding"/>
    <property type="evidence" value="ECO:0007669"/>
    <property type="project" value="UniProtKB-UniRule"/>
</dbReference>
<dbReference type="GO" id="GO:0003899">
    <property type="term" value="F:DNA-directed RNA polymerase activity"/>
    <property type="evidence" value="ECO:0007669"/>
    <property type="project" value="UniProtKB-UniRule"/>
</dbReference>
<dbReference type="GO" id="GO:0000287">
    <property type="term" value="F:magnesium ion binding"/>
    <property type="evidence" value="ECO:0007669"/>
    <property type="project" value="UniProtKB-UniRule"/>
</dbReference>
<dbReference type="GO" id="GO:0008270">
    <property type="term" value="F:zinc ion binding"/>
    <property type="evidence" value="ECO:0007669"/>
    <property type="project" value="UniProtKB-UniRule"/>
</dbReference>
<dbReference type="GO" id="GO:0006351">
    <property type="term" value="P:DNA-templated transcription"/>
    <property type="evidence" value="ECO:0007669"/>
    <property type="project" value="UniProtKB-UniRule"/>
</dbReference>
<dbReference type="CDD" id="cd02655">
    <property type="entry name" value="RNAP_beta'_C"/>
    <property type="match status" value="1"/>
</dbReference>
<dbReference type="CDD" id="cd01609">
    <property type="entry name" value="RNAP_beta'_N"/>
    <property type="match status" value="1"/>
</dbReference>
<dbReference type="FunFam" id="1.10.132.30:FF:000003">
    <property type="entry name" value="DNA-directed RNA polymerase subunit beta"/>
    <property type="match status" value="1"/>
</dbReference>
<dbReference type="FunFam" id="1.10.150.390:FF:000002">
    <property type="entry name" value="DNA-directed RNA polymerase subunit beta"/>
    <property type="match status" value="1"/>
</dbReference>
<dbReference type="FunFam" id="1.10.274.100:FF:000002">
    <property type="entry name" value="DNA-directed RNA polymerase subunit beta"/>
    <property type="match status" value="1"/>
</dbReference>
<dbReference type="FunFam" id="1.10.40.90:FF:000001">
    <property type="entry name" value="DNA-directed RNA polymerase subunit beta"/>
    <property type="match status" value="1"/>
</dbReference>
<dbReference type="FunFam" id="2.40.50.100:FF:000012">
    <property type="entry name" value="DNA-directed RNA polymerase subunit beta"/>
    <property type="match status" value="1"/>
</dbReference>
<dbReference type="FunFam" id="2.40.50.100:FF:000016">
    <property type="entry name" value="DNA-directed RNA polymerase subunit beta"/>
    <property type="match status" value="1"/>
</dbReference>
<dbReference type="FunFam" id="2.40.50.100:FF:000019">
    <property type="entry name" value="DNA-directed RNA polymerase subunit beta"/>
    <property type="match status" value="1"/>
</dbReference>
<dbReference type="FunFam" id="4.10.860.120:FF:000001">
    <property type="entry name" value="DNA-directed RNA polymerase subunit beta"/>
    <property type="match status" value="1"/>
</dbReference>
<dbReference type="Gene3D" id="1.10.132.30">
    <property type="match status" value="1"/>
</dbReference>
<dbReference type="Gene3D" id="1.10.150.390">
    <property type="match status" value="1"/>
</dbReference>
<dbReference type="Gene3D" id="1.10.1790.20">
    <property type="match status" value="1"/>
</dbReference>
<dbReference type="Gene3D" id="1.10.40.90">
    <property type="match status" value="1"/>
</dbReference>
<dbReference type="Gene3D" id="2.40.40.20">
    <property type="match status" value="1"/>
</dbReference>
<dbReference type="Gene3D" id="2.40.50.100">
    <property type="match status" value="3"/>
</dbReference>
<dbReference type="Gene3D" id="4.10.860.120">
    <property type="entry name" value="RNA polymerase II, clamp domain"/>
    <property type="match status" value="1"/>
</dbReference>
<dbReference type="Gene3D" id="1.10.274.100">
    <property type="entry name" value="RNA polymerase Rpb1, domain 3"/>
    <property type="match status" value="1"/>
</dbReference>
<dbReference type="HAMAP" id="MF_01322">
    <property type="entry name" value="RNApol_bact_RpoC"/>
    <property type="match status" value="1"/>
</dbReference>
<dbReference type="InterPro" id="IPR045867">
    <property type="entry name" value="DNA-dir_RpoC_beta_prime"/>
</dbReference>
<dbReference type="InterPro" id="IPR012754">
    <property type="entry name" value="DNA-dir_RpoC_beta_prime_bact"/>
</dbReference>
<dbReference type="InterPro" id="IPR000722">
    <property type="entry name" value="RNA_pol_asu"/>
</dbReference>
<dbReference type="InterPro" id="IPR006592">
    <property type="entry name" value="RNA_pol_N"/>
</dbReference>
<dbReference type="InterPro" id="IPR007080">
    <property type="entry name" value="RNA_pol_Rpb1_1"/>
</dbReference>
<dbReference type="InterPro" id="IPR007066">
    <property type="entry name" value="RNA_pol_Rpb1_3"/>
</dbReference>
<dbReference type="InterPro" id="IPR042102">
    <property type="entry name" value="RNA_pol_Rpb1_3_sf"/>
</dbReference>
<dbReference type="InterPro" id="IPR007083">
    <property type="entry name" value="RNA_pol_Rpb1_4"/>
</dbReference>
<dbReference type="InterPro" id="IPR007081">
    <property type="entry name" value="RNA_pol_Rpb1_5"/>
</dbReference>
<dbReference type="InterPro" id="IPR044893">
    <property type="entry name" value="RNA_pol_Rpb1_clamp_domain"/>
</dbReference>
<dbReference type="InterPro" id="IPR038120">
    <property type="entry name" value="Rpb1_funnel_sf"/>
</dbReference>
<dbReference type="NCBIfam" id="TIGR02386">
    <property type="entry name" value="rpoC_TIGR"/>
    <property type="match status" value="1"/>
</dbReference>
<dbReference type="PANTHER" id="PTHR19376">
    <property type="entry name" value="DNA-DIRECTED RNA POLYMERASE"/>
    <property type="match status" value="1"/>
</dbReference>
<dbReference type="PANTHER" id="PTHR19376:SF54">
    <property type="entry name" value="DNA-DIRECTED RNA POLYMERASE SUBUNIT BETA"/>
    <property type="match status" value="1"/>
</dbReference>
<dbReference type="Pfam" id="PF04997">
    <property type="entry name" value="RNA_pol_Rpb1_1"/>
    <property type="match status" value="1"/>
</dbReference>
<dbReference type="Pfam" id="PF00623">
    <property type="entry name" value="RNA_pol_Rpb1_2"/>
    <property type="match status" value="2"/>
</dbReference>
<dbReference type="Pfam" id="PF04983">
    <property type="entry name" value="RNA_pol_Rpb1_3"/>
    <property type="match status" value="1"/>
</dbReference>
<dbReference type="Pfam" id="PF05000">
    <property type="entry name" value="RNA_pol_Rpb1_4"/>
    <property type="match status" value="1"/>
</dbReference>
<dbReference type="Pfam" id="PF04998">
    <property type="entry name" value="RNA_pol_Rpb1_5"/>
    <property type="match status" value="1"/>
</dbReference>
<dbReference type="SMART" id="SM00663">
    <property type="entry name" value="RPOLA_N"/>
    <property type="match status" value="1"/>
</dbReference>
<dbReference type="SUPFAM" id="SSF64484">
    <property type="entry name" value="beta and beta-prime subunits of DNA dependent RNA-polymerase"/>
    <property type="match status" value="1"/>
</dbReference>
<accession>A7FNI2</accession>
<protein>
    <recommendedName>
        <fullName evidence="1">DNA-directed RNA polymerase subunit beta'</fullName>
        <shortName evidence="1">RNAP subunit beta'</shortName>
        <ecNumber evidence="1">2.7.7.6</ecNumber>
    </recommendedName>
    <alternativeName>
        <fullName evidence="1">RNA polymerase subunit beta'</fullName>
    </alternativeName>
    <alternativeName>
        <fullName evidence="1">Transcriptase subunit beta'</fullName>
    </alternativeName>
</protein>
<sequence>MKDLLKFLKAQTKTEEFDAIKIALASPDMIRSWSFGEVKKPETINYRTFKPERDGLFCARIFGPVKDYECLCGKYKRLKHRGVICEKCGVEVTQTKVRRERMGHIELASPTAHIWFLKSLPSRIGLLLDMPLRDIERVLYFESYVVIEGGMTNLERRQILTEEQYLDALEEFGDEFDAKMGAEAIQALLKNMDLEAECEILREELNETNSETKRKKLTKRIKLLEAFVQSGNKPEWMILTVLPVLPPDLRPLVPLDGGRFATSDLNDLYRRVINRNNRLKRLLDLAAPDIIVRNEKRMLQEAVDALLDNGRRGRAITGSNKRPLKSLADMIKGKQGRFRQNLLGKRVDYSGRSVITVGPYLRLHQCGLPKKMALELFKPFIYGKLELRGLATTIKAAKKMVEREEAVVWDILDEVIREHPVLLNRAPTLHRLGIQAFEPVLIEGKAIQLHPLVCAAYNADFDGDQMAVHVPLTLEAQLEARALMMSTNNILSPANGEPIIVPSQDVVLGLYYMTRDCVNAKGEGMVLTGPKEAERIYRAGLASLHARVKVRITEEIRNTEGESITRTSIIDTTVGRAILWMIVPQGLPYSIVNQPLGKKAISKMLNTCYRILGLKPTVIFADQIMYTGFAYAARSGASVGIDDMVIPEAKAGIIEEAETEVAEIQEQFQSGLVTAGERYNKVIDIWAAANERVAKAMMDNLSVEDVVNRDGVVEQQVSFNSIFMMADSGARGSAAQIRQLAGMRGLMAKPDGSIIETPITANFREGLNVLQYFISTHGARKGLADTALKTANSGYLTRRLVDVAQDLVVTEDDCGTHNGIVMTPVIEGGDVKEPLRDRVLGRVTAEEVIKPGSADILVPRNTLLDEKWCDLLEENSVDSVKVRSVVSCETDFGVCANCYGRDLARGHIINKGEAVGVIAAQSIGEPGTQLTMRTFHIGGAASRAAAESSIQVKNKGSLKLSNVKFVTNAAGKLVITSRNTELKLIDEFGRTKESYKVPYGAVMAKGDGAEVQGGETVANWDPHIMPVVTEVSGFIRFADMVDGQTITRQTDELTGLSSLVVLDSAERTGSGKDLRPALKIVDAKGNDVLIPGTDMPAQYFLPGKAIVQLEDGIQIGAGDTLARIPQESSGTKDITGGLPRVADLFEARRPKEPAILAEISGIISFGKETKGKRRLVISPLDGSDAYEEMIPKWRQLNVFEGEVVERGDVVSDGPESPHDILRLRGVHAVTRYITNEVQEVYRLQGVKINDKHIEVIVRQMLRKGTIVDAGSTDFLEGEQAEMSRVKIANRKLAAEGKIEATFTRDLLGITKASLATESFISAASFQETTRVLTEAAVAGKRDELRGLKENVIVGRLIPAGTGYAYHQDRMRRKAQGEAPVVPQVSADEATANLAELLNAGFGNNKG</sequence>